<reference key="1">
    <citation type="journal article" date="2013" name="Nature">
        <title>The zebrafish reference genome sequence and its relationship to the human genome.</title>
        <authorList>
            <person name="Howe K."/>
            <person name="Clark M.D."/>
            <person name="Torroja C.F."/>
            <person name="Torrance J."/>
            <person name="Berthelot C."/>
            <person name="Muffato M."/>
            <person name="Collins J.E."/>
            <person name="Humphray S."/>
            <person name="McLaren K."/>
            <person name="Matthews L."/>
            <person name="McLaren S."/>
            <person name="Sealy I."/>
            <person name="Caccamo M."/>
            <person name="Churcher C."/>
            <person name="Scott C."/>
            <person name="Barrett J.C."/>
            <person name="Koch R."/>
            <person name="Rauch G.J."/>
            <person name="White S."/>
            <person name="Chow W."/>
            <person name="Kilian B."/>
            <person name="Quintais L.T."/>
            <person name="Guerra-Assuncao J.A."/>
            <person name="Zhou Y."/>
            <person name="Gu Y."/>
            <person name="Yen J."/>
            <person name="Vogel J.H."/>
            <person name="Eyre T."/>
            <person name="Redmond S."/>
            <person name="Banerjee R."/>
            <person name="Chi J."/>
            <person name="Fu B."/>
            <person name="Langley E."/>
            <person name="Maguire S.F."/>
            <person name="Laird G.K."/>
            <person name="Lloyd D."/>
            <person name="Kenyon E."/>
            <person name="Donaldson S."/>
            <person name="Sehra H."/>
            <person name="Almeida-King J."/>
            <person name="Loveland J."/>
            <person name="Trevanion S."/>
            <person name="Jones M."/>
            <person name="Quail M."/>
            <person name="Willey D."/>
            <person name="Hunt A."/>
            <person name="Burton J."/>
            <person name="Sims S."/>
            <person name="McLay K."/>
            <person name="Plumb B."/>
            <person name="Davis J."/>
            <person name="Clee C."/>
            <person name="Oliver K."/>
            <person name="Clark R."/>
            <person name="Riddle C."/>
            <person name="Elliot D."/>
            <person name="Threadgold G."/>
            <person name="Harden G."/>
            <person name="Ware D."/>
            <person name="Begum S."/>
            <person name="Mortimore B."/>
            <person name="Kerry G."/>
            <person name="Heath P."/>
            <person name="Phillimore B."/>
            <person name="Tracey A."/>
            <person name="Corby N."/>
            <person name="Dunn M."/>
            <person name="Johnson C."/>
            <person name="Wood J."/>
            <person name="Clark S."/>
            <person name="Pelan S."/>
            <person name="Griffiths G."/>
            <person name="Smith M."/>
            <person name="Glithero R."/>
            <person name="Howden P."/>
            <person name="Barker N."/>
            <person name="Lloyd C."/>
            <person name="Stevens C."/>
            <person name="Harley J."/>
            <person name="Holt K."/>
            <person name="Panagiotidis G."/>
            <person name="Lovell J."/>
            <person name="Beasley H."/>
            <person name="Henderson C."/>
            <person name="Gordon D."/>
            <person name="Auger K."/>
            <person name="Wright D."/>
            <person name="Collins J."/>
            <person name="Raisen C."/>
            <person name="Dyer L."/>
            <person name="Leung K."/>
            <person name="Robertson L."/>
            <person name="Ambridge K."/>
            <person name="Leongamornlert D."/>
            <person name="McGuire S."/>
            <person name="Gilderthorp R."/>
            <person name="Griffiths C."/>
            <person name="Manthravadi D."/>
            <person name="Nichol S."/>
            <person name="Barker G."/>
            <person name="Whitehead S."/>
            <person name="Kay M."/>
            <person name="Brown J."/>
            <person name="Murnane C."/>
            <person name="Gray E."/>
            <person name="Humphries M."/>
            <person name="Sycamore N."/>
            <person name="Barker D."/>
            <person name="Saunders D."/>
            <person name="Wallis J."/>
            <person name="Babbage A."/>
            <person name="Hammond S."/>
            <person name="Mashreghi-Mohammadi M."/>
            <person name="Barr L."/>
            <person name="Martin S."/>
            <person name="Wray P."/>
            <person name="Ellington A."/>
            <person name="Matthews N."/>
            <person name="Ellwood M."/>
            <person name="Woodmansey R."/>
            <person name="Clark G."/>
            <person name="Cooper J."/>
            <person name="Tromans A."/>
            <person name="Grafham D."/>
            <person name="Skuce C."/>
            <person name="Pandian R."/>
            <person name="Andrews R."/>
            <person name="Harrison E."/>
            <person name="Kimberley A."/>
            <person name="Garnett J."/>
            <person name="Fosker N."/>
            <person name="Hall R."/>
            <person name="Garner P."/>
            <person name="Kelly D."/>
            <person name="Bird C."/>
            <person name="Palmer S."/>
            <person name="Gehring I."/>
            <person name="Berger A."/>
            <person name="Dooley C.M."/>
            <person name="Ersan-Urun Z."/>
            <person name="Eser C."/>
            <person name="Geiger H."/>
            <person name="Geisler M."/>
            <person name="Karotki L."/>
            <person name="Kirn A."/>
            <person name="Konantz J."/>
            <person name="Konantz M."/>
            <person name="Oberlander M."/>
            <person name="Rudolph-Geiger S."/>
            <person name="Teucke M."/>
            <person name="Lanz C."/>
            <person name="Raddatz G."/>
            <person name="Osoegawa K."/>
            <person name="Zhu B."/>
            <person name="Rapp A."/>
            <person name="Widaa S."/>
            <person name="Langford C."/>
            <person name="Yang F."/>
            <person name="Schuster S.C."/>
            <person name="Carter N.P."/>
            <person name="Harrow J."/>
            <person name="Ning Z."/>
            <person name="Herrero J."/>
            <person name="Searle S.M."/>
            <person name="Enright A."/>
            <person name="Geisler R."/>
            <person name="Plasterk R.H."/>
            <person name="Lee C."/>
            <person name="Westerfield M."/>
            <person name="de Jong P.J."/>
            <person name="Zon L.I."/>
            <person name="Postlethwait J.H."/>
            <person name="Nusslein-Volhard C."/>
            <person name="Hubbard T.J."/>
            <person name="Roest Crollius H."/>
            <person name="Rogers J."/>
            <person name="Stemple D.L."/>
        </authorList>
    </citation>
    <scope>NUCLEOTIDE SEQUENCE [LARGE SCALE GENOMIC DNA]</scope>
    <source>
        <strain>Tuebingen</strain>
    </source>
</reference>
<reference key="2">
    <citation type="submission" date="2006-12" db="EMBL/GenBank/DDBJ databases">
        <authorList>
            <consortium name="NIH - Zebrafish Gene Collection (ZGC) project"/>
        </authorList>
    </citation>
    <scope>NUCLEOTIDE SEQUENCE [LARGE SCALE MRNA]</scope>
    <source>
        <tissue>Kidney</tissue>
    </source>
</reference>
<accession>A3KGZ2</accession>
<accession>A1A5Z6</accession>
<feature type="chain" id="PRO_0000288980" description="2-oxoglutarate and iron-dependent oxygenase domain-containing protein 2">
    <location>
        <begin position="1"/>
        <end position="345"/>
    </location>
</feature>
<feature type="domain" description="Fe2OG dioxygenase" evidence="2">
    <location>
        <begin position="207"/>
        <end position="301"/>
    </location>
</feature>
<feature type="binding site" evidence="2">
    <location>
        <position position="227"/>
    </location>
    <ligand>
        <name>Fe cation</name>
        <dbReference type="ChEBI" id="CHEBI:24875"/>
    </ligand>
</feature>
<feature type="binding site" evidence="2">
    <location>
        <position position="229"/>
    </location>
    <ligand>
        <name>Fe cation</name>
        <dbReference type="ChEBI" id="CHEBI:24875"/>
    </ligand>
</feature>
<feature type="binding site" evidence="2">
    <location>
        <position position="282"/>
    </location>
    <ligand>
        <name>Fe cation</name>
        <dbReference type="ChEBI" id="CHEBI:24875"/>
    </ligand>
</feature>
<feature type="binding site" evidence="2">
    <location>
        <position position="292"/>
    </location>
    <ligand>
        <name>2-oxoglutarate</name>
        <dbReference type="ChEBI" id="CHEBI:16810"/>
    </ligand>
</feature>
<feature type="sequence conflict" description="In Ref. 2; AAI28873." evidence="3" ref="2">
    <original>Q</original>
    <variation>E</variation>
    <location>
        <position position="117"/>
    </location>
</feature>
<feature type="sequence conflict" description="In Ref. 2; AAI28873." evidence="3" ref="2">
    <original>S</original>
    <variation>P</variation>
    <location>
        <position position="129"/>
    </location>
</feature>
<feature type="sequence conflict" description="In Ref. 2; AAI28873." evidence="3" ref="2">
    <original>S</original>
    <variation>P</variation>
    <location>
        <position position="332"/>
    </location>
</feature>
<gene>
    <name type="primary">ogfod2</name>
    <name type="ORF">si:dkey-21k4.1</name>
    <name type="ORF">zgc:158437</name>
</gene>
<sequence length="345" mass="39820">MERFYTCSCFFTDNIFLEEYKLHVRFVSENQFRKDYQNILRSLGCESESQFRDVIGKIQAEIERRQNHKLKSTERAAVIKEIYTPLHQHVYHLQESFLAPELLEMVKYCASSEANVQGLLKLIQTEAASRVFRFQVFRKEFCKDLLEELEHFEQSDAPKGRPNTMNNYGIVLNELGFDEGFITPLREVYLRPLTALLYSDCGGNCLDSHKAFVVKYDMHEDLNLSYHYDNSEVTLNVSLGKDFTEGNLFFGDMRQVPLSETECVEVEHRVTEGLLHRGQHMHGALSISSGTRWNLIIWMRASRQRNKLCPMCGKRPTLVESDGFSDGFTMDSDGDARANVSCSLT</sequence>
<keyword id="KW-0223">Dioxygenase</keyword>
<keyword id="KW-0408">Iron</keyword>
<keyword id="KW-0479">Metal-binding</keyword>
<keyword id="KW-0560">Oxidoreductase</keyword>
<keyword id="KW-1185">Reference proteome</keyword>
<keyword id="KW-0847">Vitamin C</keyword>
<proteinExistence type="evidence at transcript level"/>
<comment type="cofactor">
    <cofactor evidence="2">
        <name>Fe(2+)</name>
        <dbReference type="ChEBI" id="CHEBI:29033"/>
    </cofactor>
    <text evidence="2">Binds 1 Fe(2+) ion per subunit.</text>
</comment>
<comment type="cofactor">
    <cofactor evidence="1">
        <name>L-ascorbate</name>
        <dbReference type="ChEBI" id="CHEBI:38290"/>
    </cofactor>
</comment>
<comment type="similarity">
    <text evidence="3">Belongs to the OGFOD2 family.</text>
</comment>
<name>OGFD2_DANRE</name>
<dbReference type="EC" id="1.14.11.-"/>
<dbReference type="EMBL" id="AL929297">
    <property type="protein sequence ID" value="CAM46973.1"/>
    <property type="molecule type" value="Genomic_DNA"/>
</dbReference>
<dbReference type="EMBL" id="BC128872">
    <property type="protein sequence ID" value="AAI28873.1"/>
    <property type="molecule type" value="mRNA"/>
</dbReference>
<dbReference type="RefSeq" id="NP_001307103.1">
    <property type="nucleotide sequence ID" value="NM_001320174.1"/>
</dbReference>
<dbReference type="SMR" id="A3KGZ2"/>
<dbReference type="FunCoup" id="A3KGZ2">
    <property type="interactions" value="151"/>
</dbReference>
<dbReference type="STRING" id="7955.ENSDARP00000116458"/>
<dbReference type="PaxDb" id="7955-ENSDARP00000073125"/>
<dbReference type="Ensembl" id="ENSDART00000078664">
    <property type="protein sequence ID" value="ENSDARP00000073125"/>
    <property type="gene ID" value="ENSDARG00000115533"/>
</dbReference>
<dbReference type="Ensembl" id="ENSDART00000133641">
    <property type="protein sequence ID" value="ENSDARP00000116458"/>
    <property type="gene ID" value="ENSDARG00000056211"/>
</dbReference>
<dbReference type="GeneID" id="790923"/>
<dbReference type="KEGG" id="dre:790923"/>
<dbReference type="AGR" id="ZFIN:ZDB-GENE-061215-54"/>
<dbReference type="CTD" id="79676"/>
<dbReference type="ZFIN" id="ZDB-GENE-061215-54">
    <property type="gene designation" value="ogfod2"/>
</dbReference>
<dbReference type="eggNOG" id="KOG1971">
    <property type="taxonomic scope" value="Eukaryota"/>
</dbReference>
<dbReference type="HOGENOM" id="CLU_045835_1_0_1"/>
<dbReference type="InParanoid" id="A3KGZ2"/>
<dbReference type="OMA" id="CQAFVDE"/>
<dbReference type="OrthoDB" id="1736837at2759"/>
<dbReference type="PhylomeDB" id="A3KGZ2"/>
<dbReference type="TreeFam" id="TF329650"/>
<dbReference type="PRO" id="PR:A3KGZ2"/>
<dbReference type="Proteomes" id="UP000000437">
    <property type="component" value="Alternate scaffold 5"/>
</dbReference>
<dbReference type="Proteomes" id="UP000000437">
    <property type="component" value="Chromosome 5"/>
</dbReference>
<dbReference type="Bgee" id="ENSDARG00000056211">
    <property type="expression patterns" value="Expressed in testis and 21 other cell types or tissues"/>
</dbReference>
<dbReference type="GO" id="GO:0051213">
    <property type="term" value="F:dioxygenase activity"/>
    <property type="evidence" value="ECO:0007669"/>
    <property type="project" value="UniProtKB-KW"/>
</dbReference>
<dbReference type="GO" id="GO:0005506">
    <property type="term" value="F:iron ion binding"/>
    <property type="evidence" value="ECO:0007669"/>
    <property type="project" value="InterPro"/>
</dbReference>
<dbReference type="GO" id="GO:0031418">
    <property type="term" value="F:L-ascorbic acid binding"/>
    <property type="evidence" value="ECO:0007669"/>
    <property type="project" value="UniProtKB-KW"/>
</dbReference>
<dbReference type="GO" id="GO:0016705">
    <property type="term" value="F:oxidoreductase activity, acting on paired donors, with incorporation or reduction of molecular oxygen"/>
    <property type="evidence" value="ECO:0007669"/>
    <property type="project" value="InterPro"/>
</dbReference>
<dbReference type="InterPro" id="IPR005123">
    <property type="entry name" value="Oxoglu/Fe-dep_dioxygenase_dom"/>
</dbReference>
<dbReference type="InterPro" id="IPR006620">
    <property type="entry name" value="Pro_4_hyd_alph"/>
</dbReference>
<dbReference type="PANTHER" id="PTHR24014">
    <property type="entry name" value="2-OXOGLUTARATE AND IRON-DEPENDENT OXYGENASE DOMAIN-CONTAINING PROTEIN 2"/>
    <property type="match status" value="1"/>
</dbReference>
<dbReference type="PANTHER" id="PTHR24014:SF4">
    <property type="entry name" value="2-OXOGLUTARATE AND IRON-DEPENDENT OXYGENASE DOMAIN-CONTAINING PROTEIN 2"/>
    <property type="match status" value="1"/>
</dbReference>
<dbReference type="Pfam" id="PF25238">
    <property type="entry name" value="OGFOD2-like"/>
    <property type="match status" value="1"/>
</dbReference>
<dbReference type="SMART" id="SM00702">
    <property type="entry name" value="P4Hc"/>
    <property type="match status" value="1"/>
</dbReference>
<dbReference type="PROSITE" id="PS51471">
    <property type="entry name" value="FE2OG_OXY"/>
    <property type="match status" value="1"/>
</dbReference>
<protein>
    <recommendedName>
        <fullName>2-oxoglutarate and iron-dependent oxygenase domain-containing protein 2</fullName>
        <ecNumber>1.14.11.-</ecNumber>
    </recommendedName>
</protein>
<evidence type="ECO:0000250" key="1"/>
<evidence type="ECO:0000255" key="2">
    <source>
        <dbReference type="PROSITE-ProRule" id="PRU00805"/>
    </source>
</evidence>
<evidence type="ECO:0000305" key="3"/>
<organism>
    <name type="scientific">Danio rerio</name>
    <name type="common">Zebrafish</name>
    <name type="synonym">Brachydanio rerio</name>
    <dbReference type="NCBI Taxonomy" id="7955"/>
    <lineage>
        <taxon>Eukaryota</taxon>
        <taxon>Metazoa</taxon>
        <taxon>Chordata</taxon>
        <taxon>Craniata</taxon>
        <taxon>Vertebrata</taxon>
        <taxon>Euteleostomi</taxon>
        <taxon>Actinopterygii</taxon>
        <taxon>Neopterygii</taxon>
        <taxon>Teleostei</taxon>
        <taxon>Ostariophysi</taxon>
        <taxon>Cypriniformes</taxon>
        <taxon>Danionidae</taxon>
        <taxon>Danioninae</taxon>
        <taxon>Danio</taxon>
    </lineage>
</organism>